<proteinExistence type="inferred from homology"/>
<reference key="1">
    <citation type="journal article" date="2003" name="Genome Res.">
        <title>Comparative complete genome sequence analysis of the amino acid replacements responsible for the thermostability of Corynebacterium efficiens.</title>
        <authorList>
            <person name="Nishio Y."/>
            <person name="Nakamura Y."/>
            <person name="Kawarabayasi Y."/>
            <person name="Usuda Y."/>
            <person name="Kimura E."/>
            <person name="Sugimoto S."/>
            <person name="Matsui K."/>
            <person name="Yamagishi A."/>
            <person name="Kikuchi H."/>
            <person name="Ikeo K."/>
            <person name="Gojobori T."/>
        </authorList>
    </citation>
    <scope>NUCLEOTIDE SEQUENCE [LARGE SCALE GENOMIC DNA]</scope>
    <source>
        <strain>DSM 44549 / YS-314 / AJ 12310 / JCM 11189 / NBRC 100395</strain>
    </source>
</reference>
<organism>
    <name type="scientific">Corynebacterium efficiens (strain DSM 44549 / YS-314 / AJ 12310 / JCM 11189 / NBRC 100395)</name>
    <dbReference type="NCBI Taxonomy" id="196164"/>
    <lineage>
        <taxon>Bacteria</taxon>
        <taxon>Bacillati</taxon>
        <taxon>Actinomycetota</taxon>
        <taxon>Actinomycetes</taxon>
        <taxon>Mycobacteriales</taxon>
        <taxon>Corynebacteriaceae</taxon>
        <taxon>Corynebacterium</taxon>
    </lineage>
</organism>
<dbReference type="EC" id="4.2.3.5" evidence="1"/>
<dbReference type="EMBL" id="BA000035">
    <property type="protein sequence ID" value="BAC18552.1"/>
    <property type="status" value="ALT_INIT"/>
    <property type="molecule type" value="Genomic_DNA"/>
</dbReference>
<dbReference type="SMR" id="Q8FT29"/>
<dbReference type="STRING" id="196164.gene:10742163"/>
<dbReference type="KEGG" id="cef:CE1743"/>
<dbReference type="eggNOG" id="COG0082">
    <property type="taxonomic scope" value="Bacteria"/>
</dbReference>
<dbReference type="HOGENOM" id="CLU_034547_2_0_11"/>
<dbReference type="OrthoDB" id="9771806at2"/>
<dbReference type="UniPathway" id="UPA00053">
    <property type="reaction ID" value="UER00090"/>
</dbReference>
<dbReference type="Proteomes" id="UP000001409">
    <property type="component" value="Chromosome"/>
</dbReference>
<dbReference type="GO" id="GO:0005829">
    <property type="term" value="C:cytosol"/>
    <property type="evidence" value="ECO:0007669"/>
    <property type="project" value="TreeGrafter"/>
</dbReference>
<dbReference type="GO" id="GO:0004107">
    <property type="term" value="F:chorismate synthase activity"/>
    <property type="evidence" value="ECO:0007669"/>
    <property type="project" value="UniProtKB-UniRule"/>
</dbReference>
<dbReference type="GO" id="GO:0010181">
    <property type="term" value="F:FMN binding"/>
    <property type="evidence" value="ECO:0007669"/>
    <property type="project" value="TreeGrafter"/>
</dbReference>
<dbReference type="GO" id="GO:0008652">
    <property type="term" value="P:amino acid biosynthetic process"/>
    <property type="evidence" value="ECO:0007669"/>
    <property type="project" value="UniProtKB-KW"/>
</dbReference>
<dbReference type="GO" id="GO:0009073">
    <property type="term" value="P:aromatic amino acid family biosynthetic process"/>
    <property type="evidence" value="ECO:0007669"/>
    <property type="project" value="UniProtKB-KW"/>
</dbReference>
<dbReference type="GO" id="GO:0009423">
    <property type="term" value="P:chorismate biosynthetic process"/>
    <property type="evidence" value="ECO:0007669"/>
    <property type="project" value="UniProtKB-UniRule"/>
</dbReference>
<dbReference type="CDD" id="cd07304">
    <property type="entry name" value="Chorismate_synthase"/>
    <property type="match status" value="1"/>
</dbReference>
<dbReference type="FunFam" id="3.60.150.10:FF:000002">
    <property type="entry name" value="Chorismate synthase"/>
    <property type="match status" value="1"/>
</dbReference>
<dbReference type="Gene3D" id="3.60.150.10">
    <property type="entry name" value="Chorismate synthase AroC"/>
    <property type="match status" value="1"/>
</dbReference>
<dbReference type="HAMAP" id="MF_00300">
    <property type="entry name" value="Chorismate_synth"/>
    <property type="match status" value="1"/>
</dbReference>
<dbReference type="InterPro" id="IPR000453">
    <property type="entry name" value="Chorismate_synth"/>
</dbReference>
<dbReference type="InterPro" id="IPR035904">
    <property type="entry name" value="Chorismate_synth_AroC_sf"/>
</dbReference>
<dbReference type="InterPro" id="IPR020541">
    <property type="entry name" value="Chorismate_synthase_CS"/>
</dbReference>
<dbReference type="NCBIfam" id="TIGR00033">
    <property type="entry name" value="aroC"/>
    <property type="match status" value="1"/>
</dbReference>
<dbReference type="NCBIfam" id="NF003793">
    <property type="entry name" value="PRK05382.1"/>
    <property type="match status" value="1"/>
</dbReference>
<dbReference type="PANTHER" id="PTHR21085">
    <property type="entry name" value="CHORISMATE SYNTHASE"/>
    <property type="match status" value="1"/>
</dbReference>
<dbReference type="PANTHER" id="PTHR21085:SF0">
    <property type="entry name" value="CHORISMATE SYNTHASE"/>
    <property type="match status" value="1"/>
</dbReference>
<dbReference type="Pfam" id="PF01264">
    <property type="entry name" value="Chorismate_synt"/>
    <property type="match status" value="1"/>
</dbReference>
<dbReference type="PIRSF" id="PIRSF001456">
    <property type="entry name" value="Chorismate_synth"/>
    <property type="match status" value="1"/>
</dbReference>
<dbReference type="SUPFAM" id="SSF103263">
    <property type="entry name" value="Chorismate synthase, AroC"/>
    <property type="match status" value="1"/>
</dbReference>
<dbReference type="PROSITE" id="PS00787">
    <property type="entry name" value="CHORISMATE_SYNTHASE_1"/>
    <property type="match status" value="1"/>
</dbReference>
<dbReference type="PROSITE" id="PS00788">
    <property type="entry name" value="CHORISMATE_SYNTHASE_2"/>
    <property type="match status" value="1"/>
</dbReference>
<dbReference type="PROSITE" id="PS00789">
    <property type="entry name" value="CHORISMATE_SYNTHASE_3"/>
    <property type="match status" value="1"/>
</dbReference>
<gene>
    <name evidence="1" type="primary">aroC</name>
    <name type="ordered locus">CE1743</name>
</gene>
<comment type="function">
    <text evidence="1">Catalyzes the anti-1,4-elimination of the C-3 phosphate and the C-6 proR hydrogen from 5-enolpyruvylshikimate-3-phosphate (EPSP) to yield chorismate, which is the branch point compound that serves as the starting substrate for the three terminal pathways of aromatic amino acid biosynthesis. This reaction introduces a second double bond into the aromatic ring system.</text>
</comment>
<comment type="catalytic activity">
    <reaction evidence="1">
        <text>5-O-(1-carboxyvinyl)-3-phosphoshikimate = chorismate + phosphate</text>
        <dbReference type="Rhea" id="RHEA:21020"/>
        <dbReference type="ChEBI" id="CHEBI:29748"/>
        <dbReference type="ChEBI" id="CHEBI:43474"/>
        <dbReference type="ChEBI" id="CHEBI:57701"/>
        <dbReference type="EC" id="4.2.3.5"/>
    </reaction>
</comment>
<comment type="cofactor">
    <cofactor evidence="1">
        <name>FMNH2</name>
        <dbReference type="ChEBI" id="CHEBI:57618"/>
    </cofactor>
    <text evidence="1">Reduced FMN (FMNH(2)).</text>
</comment>
<comment type="pathway">
    <text evidence="1">Metabolic intermediate biosynthesis; chorismate biosynthesis; chorismate from D-erythrose 4-phosphate and phosphoenolpyruvate: step 7/7.</text>
</comment>
<comment type="subunit">
    <text evidence="1">Homotetramer.</text>
</comment>
<comment type="similarity">
    <text evidence="1">Belongs to the chorismate synthase family.</text>
</comment>
<comment type="sequence caution" evidence="2">
    <conflict type="erroneous initiation">
        <sequence resource="EMBL-CDS" id="BAC18552"/>
    </conflict>
    <text>Extended N-terminus.</text>
</comment>
<feature type="chain" id="PRO_0000140578" description="Chorismate synthase">
    <location>
        <begin position="1"/>
        <end position="407"/>
    </location>
</feature>
<feature type="binding site" evidence="1">
    <location>
        <position position="43"/>
    </location>
    <ligand>
        <name>NADP(+)</name>
        <dbReference type="ChEBI" id="CHEBI:58349"/>
    </ligand>
</feature>
<feature type="binding site" evidence="1">
    <location>
        <position position="49"/>
    </location>
    <ligand>
        <name>NADP(+)</name>
        <dbReference type="ChEBI" id="CHEBI:58349"/>
    </ligand>
</feature>
<feature type="binding site" evidence="1">
    <location>
        <begin position="143"/>
        <end position="145"/>
    </location>
    <ligand>
        <name>FMN</name>
        <dbReference type="ChEBI" id="CHEBI:58210"/>
    </ligand>
</feature>
<feature type="binding site" evidence="1">
    <location>
        <begin position="264"/>
        <end position="265"/>
    </location>
    <ligand>
        <name>FMN</name>
        <dbReference type="ChEBI" id="CHEBI:58210"/>
    </ligand>
</feature>
<feature type="binding site" evidence="1">
    <location>
        <position position="308"/>
    </location>
    <ligand>
        <name>FMN</name>
        <dbReference type="ChEBI" id="CHEBI:58210"/>
    </ligand>
</feature>
<feature type="binding site" evidence="1">
    <location>
        <begin position="323"/>
        <end position="327"/>
    </location>
    <ligand>
        <name>FMN</name>
        <dbReference type="ChEBI" id="CHEBI:58210"/>
    </ligand>
</feature>
<feature type="binding site" evidence="1">
    <location>
        <position position="349"/>
    </location>
    <ligand>
        <name>FMN</name>
        <dbReference type="ChEBI" id="CHEBI:58210"/>
    </ligand>
</feature>
<protein>
    <recommendedName>
        <fullName evidence="1">Chorismate synthase</fullName>
        <shortName evidence="1">CS</shortName>
        <ecNumber evidence="1">4.2.3.5</ecNumber>
    </recommendedName>
    <alternativeName>
        <fullName evidence="1">5-enolpyruvylshikimate-3-phosphate phospholyase</fullName>
    </alternativeName>
</protein>
<accession>Q8FT29</accession>
<name>AROC_COREF</name>
<evidence type="ECO:0000255" key="1">
    <source>
        <dbReference type="HAMAP-Rule" id="MF_00300"/>
    </source>
</evidence>
<evidence type="ECO:0000305" key="2"/>
<keyword id="KW-0028">Amino-acid biosynthesis</keyword>
<keyword id="KW-0057">Aromatic amino acid biosynthesis</keyword>
<keyword id="KW-0274">FAD</keyword>
<keyword id="KW-0285">Flavoprotein</keyword>
<keyword id="KW-0288">FMN</keyword>
<keyword id="KW-0456">Lyase</keyword>
<keyword id="KW-0521">NADP</keyword>
<keyword id="KW-1185">Reference proteome</keyword>
<sequence length="407" mass="43498">MLGMLRWTTAGESHGQALVATVEHMPAGVPVTKDEVTYQLARRRLGYGRGARMKFEQDKLTFLTGIRHGLTLGSPISIVIGNSEWPKWTTIMSSDALDMEDPENVAAMSSGRGAKLTRPRPGHADFAGMLKYGFDDARNVLERSSARETAARVAAATVARSFLRETLGVEVLSHVVSIGRSEPYEGPTPTFADITAIDESPVRSFGKEAEASMITEIEAAKKSGDTLGGIVEVIVEGLPIGLGSHISGEDRLDAQLAAALMGIQAIKGVEIGDGFEEARRRGSEAHDEMVRDEDGVYRTTNRAGGLEGGMTNGETLRVRAAMKPISTVPRALKTVDMATGDAATGIHQRSDVCAVPAAGVVAEAMVALVLARAVLNKFGGDSLEETTCNIRCYLERIGKRLEFNDGE</sequence>